<accession>Q6F494</accession>
<dbReference type="EC" id="4.1.1.32" evidence="1 2"/>
<dbReference type="EMBL" id="AB167819">
    <property type="protein sequence ID" value="BAD26729.1"/>
    <property type="molecule type" value="Genomic_DNA"/>
</dbReference>
<dbReference type="EMBL" id="AP006878">
    <property type="protein sequence ID" value="BAD85594.1"/>
    <property type="molecule type" value="Genomic_DNA"/>
</dbReference>
<dbReference type="RefSeq" id="WP_011250356.1">
    <property type="nucleotide sequence ID" value="NC_006624.1"/>
</dbReference>
<dbReference type="SMR" id="Q6F494"/>
<dbReference type="STRING" id="69014.TK1405"/>
<dbReference type="EnsemblBacteria" id="BAD85594">
    <property type="protein sequence ID" value="BAD85594"/>
    <property type="gene ID" value="TK1405"/>
</dbReference>
<dbReference type="GeneID" id="78447925"/>
<dbReference type="KEGG" id="tko:TK1405"/>
<dbReference type="PATRIC" id="fig|69014.16.peg.1367"/>
<dbReference type="eggNOG" id="arCOG05865">
    <property type="taxonomic scope" value="Archaea"/>
</dbReference>
<dbReference type="HOGENOM" id="CLU_028872_1_1_2"/>
<dbReference type="InParanoid" id="Q6F494"/>
<dbReference type="OrthoDB" id="55875at2157"/>
<dbReference type="PhylomeDB" id="Q6F494"/>
<dbReference type="BRENDA" id="4.1.1.32">
    <property type="organism ID" value="5246"/>
</dbReference>
<dbReference type="UniPathway" id="UPA00138"/>
<dbReference type="Proteomes" id="UP000000536">
    <property type="component" value="Chromosome"/>
</dbReference>
<dbReference type="GO" id="GO:0005829">
    <property type="term" value="C:cytosol"/>
    <property type="evidence" value="ECO:0000318"/>
    <property type="project" value="GO_Central"/>
</dbReference>
<dbReference type="GO" id="GO:0005525">
    <property type="term" value="F:GTP binding"/>
    <property type="evidence" value="ECO:0007669"/>
    <property type="project" value="UniProtKB-UniRule"/>
</dbReference>
<dbReference type="GO" id="GO:0030145">
    <property type="term" value="F:manganese ion binding"/>
    <property type="evidence" value="ECO:0000318"/>
    <property type="project" value="GO_Central"/>
</dbReference>
<dbReference type="GO" id="GO:0004613">
    <property type="term" value="F:phosphoenolpyruvate carboxykinase (GTP) activity"/>
    <property type="evidence" value="ECO:0000318"/>
    <property type="project" value="GO_Central"/>
</dbReference>
<dbReference type="GO" id="GO:0071333">
    <property type="term" value="P:cellular response to glucose stimulus"/>
    <property type="evidence" value="ECO:0000318"/>
    <property type="project" value="GO_Central"/>
</dbReference>
<dbReference type="GO" id="GO:0006094">
    <property type="term" value="P:gluconeogenesis"/>
    <property type="evidence" value="ECO:0000318"/>
    <property type="project" value="GO_Central"/>
</dbReference>
<dbReference type="GO" id="GO:0046327">
    <property type="term" value="P:glycerol biosynthetic process from pyruvate"/>
    <property type="evidence" value="ECO:0000318"/>
    <property type="project" value="GO_Central"/>
</dbReference>
<dbReference type="GO" id="GO:0006107">
    <property type="term" value="P:oxaloacetate metabolic process"/>
    <property type="evidence" value="ECO:0000318"/>
    <property type="project" value="GO_Central"/>
</dbReference>
<dbReference type="GO" id="GO:0019543">
    <property type="term" value="P:propionate catabolic process"/>
    <property type="evidence" value="ECO:0000318"/>
    <property type="project" value="GO_Central"/>
</dbReference>
<dbReference type="GO" id="GO:0033993">
    <property type="term" value="P:response to lipid"/>
    <property type="evidence" value="ECO:0000318"/>
    <property type="project" value="GO_Central"/>
</dbReference>
<dbReference type="GO" id="GO:0042594">
    <property type="term" value="P:response to starvation"/>
    <property type="evidence" value="ECO:0000318"/>
    <property type="project" value="GO_Central"/>
</dbReference>
<dbReference type="CDD" id="cd00819">
    <property type="entry name" value="PEPCK_GTP"/>
    <property type="match status" value="1"/>
</dbReference>
<dbReference type="FunFam" id="3.40.449.10:FF:000010">
    <property type="entry name" value="Phosphoenolpyruvate carboxykinase [GTP]"/>
    <property type="match status" value="1"/>
</dbReference>
<dbReference type="Gene3D" id="3.90.228.20">
    <property type="match status" value="1"/>
</dbReference>
<dbReference type="Gene3D" id="3.40.449.10">
    <property type="entry name" value="Phosphoenolpyruvate Carboxykinase, domain 1"/>
    <property type="match status" value="1"/>
</dbReference>
<dbReference type="Gene3D" id="2.170.8.10">
    <property type="entry name" value="Phosphoenolpyruvate Carboxykinase, domain 2"/>
    <property type="match status" value="1"/>
</dbReference>
<dbReference type="HAMAP" id="MF_00452">
    <property type="entry name" value="PEPCK_GTP"/>
    <property type="match status" value="1"/>
</dbReference>
<dbReference type="InterPro" id="IPR018091">
    <property type="entry name" value="PEP_carboxykin_GTP_CS"/>
</dbReference>
<dbReference type="InterPro" id="IPR013035">
    <property type="entry name" value="PEP_carboxykinase_C"/>
</dbReference>
<dbReference type="InterPro" id="IPR008209">
    <property type="entry name" value="PEP_carboxykinase_GTP"/>
</dbReference>
<dbReference type="InterPro" id="IPR035077">
    <property type="entry name" value="PEP_carboxykinase_GTP_C"/>
</dbReference>
<dbReference type="InterPro" id="IPR035078">
    <property type="entry name" value="PEP_carboxykinase_GTP_N"/>
</dbReference>
<dbReference type="InterPro" id="IPR008210">
    <property type="entry name" value="PEP_carboxykinase_N"/>
</dbReference>
<dbReference type="NCBIfam" id="NF003253">
    <property type="entry name" value="PRK04210.1"/>
    <property type="match status" value="1"/>
</dbReference>
<dbReference type="PANTHER" id="PTHR11561">
    <property type="entry name" value="PHOSPHOENOLPYRUVATE CARBOXYKINASE"/>
    <property type="match status" value="1"/>
</dbReference>
<dbReference type="PANTHER" id="PTHR11561:SF0">
    <property type="entry name" value="PHOSPHOENOLPYRUVATE CARBOXYKINASE [GTP]-RELATED"/>
    <property type="match status" value="1"/>
</dbReference>
<dbReference type="Pfam" id="PF00821">
    <property type="entry name" value="PEPCK_GTP"/>
    <property type="match status" value="1"/>
</dbReference>
<dbReference type="Pfam" id="PF17297">
    <property type="entry name" value="PEPCK_N"/>
    <property type="match status" value="1"/>
</dbReference>
<dbReference type="PIRSF" id="PIRSF001348">
    <property type="entry name" value="PEP_carboxykinase_GTP"/>
    <property type="match status" value="1"/>
</dbReference>
<dbReference type="SUPFAM" id="SSF68923">
    <property type="entry name" value="PEP carboxykinase N-terminal domain"/>
    <property type="match status" value="1"/>
</dbReference>
<dbReference type="SUPFAM" id="SSF53795">
    <property type="entry name" value="PEP carboxykinase-like"/>
    <property type="match status" value="1"/>
</dbReference>
<dbReference type="PROSITE" id="PS00505">
    <property type="entry name" value="PEPCK_GTP"/>
    <property type="match status" value="1"/>
</dbReference>
<reference key="1">
    <citation type="journal article" date="2004" name="J. Bacteriol.">
        <title>First characterization of an archaeal GTP-dependent phosphoenolpyruvate carboxykinase from the hyperthermophilic archaeon Thermococcus kodakaraensis KOD1.</title>
        <authorList>
            <person name="Fukuda W."/>
            <person name="Fukui T."/>
            <person name="Atomi H."/>
            <person name="Imanaka T."/>
        </authorList>
    </citation>
    <scope>NUCLEOTIDE SEQUENCE [GENOMIC DNA]</scope>
    <scope>FUNCTION</scope>
    <scope>CATALYTIC ACTIVITY</scope>
    <scope>COFACTOR</scope>
    <scope>SUBUNIT</scope>
    <scope>BIOPHYSICOCHEMICAL PROPERTIES</scope>
    <source>
        <strain>ATCC BAA-918 / JCM 12380 / KOD1</strain>
    </source>
</reference>
<reference key="2">
    <citation type="journal article" date="2005" name="Genome Res.">
        <title>Complete genome sequence of the hyperthermophilic archaeon Thermococcus kodakaraensis KOD1 and comparison with Pyrococcus genomes.</title>
        <authorList>
            <person name="Fukui T."/>
            <person name="Atomi H."/>
            <person name="Kanai T."/>
            <person name="Matsumi R."/>
            <person name="Fujiwara S."/>
            <person name="Imanaka T."/>
        </authorList>
    </citation>
    <scope>NUCLEOTIDE SEQUENCE [LARGE SCALE GENOMIC DNA]</scope>
    <source>
        <strain>ATCC BAA-918 / JCM 12380 / KOD1</strain>
    </source>
</reference>
<organism>
    <name type="scientific">Thermococcus kodakarensis (strain ATCC BAA-918 / JCM 12380 / KOD1)</name>
    <name type="common">Pyrococcus kodakaraensis (strain KOD1)</name>
    <dbReference type="NCBI Taxonomy" id="69014"/>
    <lineage>
        <taxon>Archaea</taxon>
        <taxon>Methanobacteriati</taxon>
        <taxon>Methanobacteriota</taxon>
        <taxon>Thermococci</taxon>
        <taxon>Thermococcales</taxon>
        <taxon>Thermococcaceae</taxon>
        <taxon>Thermococcus</taxon>
    </lineage>
</organism>
<keyword id="KW-0963">Cytoplasm</keyword>
<keyword id="KW-0210">Decarboxylase</keyword>
<keyword id="KW-0312">Gluconeogenesis</keyword>
<keyword id="KW-0342">GTP-binding</keyword>
<keyword id="KW-0456">Lyase</keyword>
<keyword id="KW-0464">Manganese</keyword>
<keyword id="KW-0479">Metal-binding</keyword>
<keyword id="KW-0547">Nucleotide-binding</keyword>
<keyword id="KW-1185">Reference proteome</keyword>
<protein>
    <recommendedName>
        <fullName evidence="1 3">Phosphoenolpyruvate carboxykinase [GTP]</fullName>
        <shortName evidence="1 3">PEP carboxykinase</shortName>
        <shortName evidence="1 3">PEPCK</shortName>
        <ecNumber evidence="1 2">4.1.1.32</ecNumber>
    </recommendedName>
    <alternativeName>
        <fullName evidence="1 3">GTP-dependent phosphoenolpyruvate carboxykinase</fullName>
        <shortName evidence="1 3">GTP-PEPCK</shortName>
    </alternativeName>
    <alternativeName>
        <fullName evidence="1 3">PckTk</fullName>
    </alternativeName>
</protein>
<proteinExistence type="evidence at protein level"/>
<sequence length="623" mass="72039">MNALERLEKLLDKEQFEKVKAIDNPELHEFLAEWIEWLEPDKVFVCTDSPEDEGYVRWKALYYGEERMLETPNHTVHYDNYYDQARDKANTAILLPGGKKLPYINTKDRDEGLKEIRELMKGIMKGKELFVCFFVLGPKNSIFTIPAVQLTDSAYVAHSEFILYRKGYEEFKRLGRSARFFRFVHSAGELDERKTSKNLDKRRIYIDLEDETVYSVNTQYGGNTIGLKKLAFRLTIKRAVEEGWLSEHMFLMRVNGPHGRKTYFTGAYPSMCGKTSTAMIPWENIVGDDLTFILPVNGIARGANVEKGVFGIIQGVNPEDDPIIWQVLHSPVEIIFSNVLVKDGKPYWNDMGIEIPDEGENHSGKWWRGKKDAEGNEIPPSHKNARFTVSLEHFPNVDMEALENPCGVEVGGMIFGGRDADTWPPVREAFNWEHGVITMGASLESETTAATLGKEGVRAFNPMAILDFMSVHLGDYLRNYLEFGRKLKKTPKIFAVNYFLRENGVWLNHKLDKAVWLKWMELRVHGDVEAIETPIGYIPKYKDLAKLFKDVLNKEYTKEDYERQFKIRVPELLAKIDRIEEIYRKLDNVPEELFKVLEEERQRLLEAREKYGDYISPFALEGE</sequence>
<comment type="function">
    <text evidence="1 2">Involved in the gluconeogenesis. Catalyzes the conversion of oxaloacetate (OAA) to phosphoenolpyruvate (PEP), the rate-limiting step in the metabolic pathway that produces glucose from lactate and other precursors derived from the citric acid cycle.</text>
</comment>
<comment type="catalytic activity">
    <reaction evidence="1 2">
        <text>oxaloacetate + GTP = phosphoenolpyruvate + GDP + CO2</text>
        <dbReference type="Rhea" id="RHEA:10388"/>
        <dbReference type="ChEBI" id="CHEBI:16452"/>
        <dbReference type="ChEBI" id="CHEBI:16526"/>
        <dbReference type="ChEBI" id="CHEBI:37565"/>
        <dbReference type="ChEBI" id="CHEBI:58189"/>
        <dbReference type="ChEBI" id="CHEBI:58702"/>
        <dbReference type="EC" id="4.1.1.32"/>
    </reaction>
</comment>
<comment type="cofactor">
    <cofactor evidence="1 2">
        <name>Mn(2+)</name>
        <dbReference type="ChEBI" id="CHEBI:29035"/>
    </cofactor>
    <text evidence="1 2">Binds 1 Mn(2+) ion per subunit.</text>
</comment>
<comment type="biophysicochemical properties">
    <kinetics>
        <KM evidence="2">18.1 uM for oxaloacetate (at 60 degrees Celsius)</KM>
        <KM evidence="2">131 uM for phosphoenolpyruvate (at 60 degrees Celsius)</KM>
        <KM evidence="2">18.5 uM for GDP (at 60 degrees Celsius)</KM>
        <KM evidence="2">36.1 uM for GTP (at 60 degrees Celsius)</KM>
        <Vmax evidence="2">44.4 umol/min/mg enzyme for the forward reaction (at 60 degrees Celsius)</Vmax>
        <Vmax evidence="2">76.9 umol/min/mg enzyme for the reverse reaction (at 60 degrees Celsius)</Vmax>
    </kinetics>
    <phDependence>
        <text evidence="2">Optimum pH is 7.</text>
    </phDependence>
    <temperatureDependence>
        <text evidence="2">Optimum temperature is 80 degrees Celsius. Thermostable. Half-life at the optimal temperature is 53 minutes.</text>
    </temperatureDependence>
</comment>
<comment type="pathway">
    <text evidence="1 4">Carbohydrate biosynthesis; gluconeogenesis.</text>
</comment>
<comment type="subunit">
    <text evidence="2">Homotetramer.</text>
</comment>
<comment type="subcellular location">
    <subcellularLocation>
        <location evidence="1 4">Cytoplasm</location>
    </subcellularLocation>
</comment>
<comment type="similarity">
    <text evidence="1 4">Belongs to the phosphoenolpyruvate carboxykinase [GTP] family.</text>
</comment>
<evidence type="ECO:0000255" key="1">
    <source>
        <dbReference type="HAMAP-Rule" id="MF_00452"/>
    </source>
</evidence>
<evidence type="ECO:0000269" key="2">
    <source>
    </source>
</evidence>
<evidence type="ECO:0000303" key="3">
    <source>
    </source>
</evidence>
<evidence type="ECO:0000305" key="4"/>
<gene>
    <name type="primary">pckG</name>
    <name type="synonym">pck</name>
    <name type="ordered locus">TK1405</name>
</gene>
<name>PCKG_THEKO</name>
<feature type="chain" id="PRO_0000103620" description="Phosphoenolpyruvate carboxykinase [GTP]">
    <location>
        <begin position="1"/>
        <end position="623"/>
    </location>
</feature>
<feature type="active site" evidence="1">
    <location>
        <position position="272"/>
    </location>
</feature>
<feature type="binding site" evidence="1">
    <location>
        <position position="86"/>
    </location>
    <ligand>
        <name>substrate</name>
    </ligand>
</feature>
<feature type="binding site" evidence="1">
    <location>
        <begin position="220"/>
        <end position="222"/>
    </location>
    <ligand>
        <name>substrate</name>
    </ligand>
</feature>
<feature type="binding site" evidence="1">
    <location>
        <position position="229"/>
    </location>
    <ligand>
        <name>Mn(2+)</name>
        <dbReference type="ChEBI" id="CHEBI:29035"/>
    </ligand>
</feature>
<feature type="binding site" evidence="1">
    <location>
        <position position="248"/>
    </location>
    <ligand>
        <name>Mn(2+)</name>
        <dbReference type="ChEBI" id="CHEBI:29035"/>
    </ligand>
</feature>
<feature type="binding site" evidence="1">
    <location>
        <position position="270"/>
    </location>
    <ligand>
        <name>substrate</name>
    </ligand>
</feature>
<feature type="binding site" evidence="1">
    <location>
        <begin position="271"/>
        <end position="276"/>
    </location>
    <ligand>
        <name>GTP</name>
        <dbReference type="ChEBI" id="CHEBI:37565"/>
    </ligand>
</feature>
<feature type="binding site" evidence="1">
    <location>
        <position position="289"/>
    </location>
    <ligand>
        <name>Mn(2+)</name>
        <dbReference type="ChEBI" id="CHEBI:29035"/>
    </ligand>
</feature>
<feature type="binding site" evidence="1">
    <location>
        <begin position="384"/>
        <end position="386"/>
    </location>
    <ligand>
        <name>substrate</name>
    </ligand>
</feature>
<feature type="binding site" evidence="1">
    <location>
        <position position="386"/>
    </location>
    <ligand>
        <name>GTP</name>
        <dbReference type="ChEBI" id="CHEBI:37565"/>
    </ligand>
</feature>
<feature type="binding site" evidence="1">
    <location>
        <position position="418"/>
    </location>
    <ligand>
        <name>GTP</name>
        <dbReference type="ChEBI" id="CHEBI:37565"/>
    </ligand>
</feature>